<dbReference type="EMBL" id="HM008662">
    <property type="protein sequence ID" value="ADI48424.1"/>
    <property type="molecule type" value="mRNA"/>
</dbReference>
<dbReference type="EMBL" id="EU969601">
    <property type="protein sequence ID" value="ACG41719.1"/>
    <property type="molecule type" value="mRNA"/>
</dbReference>
<dbReference type="RefSeq" id="NP_001151128.1">
    <property type="nucleotide sequence ID" value="NM_001157656.1"/>
</dbReference>
<dbReference type="RefSeq" id="NP_001353632.1">
    <property type="nucleotide sequence ID" value="NM_001366703.1"/>
</dbReference>
<dbReference type="FunCoup" id="D9HP26">
    <property type="interactions" value="10"/>
</dbReference>
<dbReference type="STRING" id="4577.D9HP26"/>
<dbReference type="PaxDb" id="4577-GRMZM2G325477_P02"/>
<dbReference type="EnsemblPlants" id="Zm00001eb211260_T001">
    <property type="protein sequence ID" value="Zm00001eb211260_P001"/>
    <property type="gene ID" value="Zm00001eb211260"/>
</dbReference>
<dbReference type="GeneID" id="100284761"/>
<dbReference type="Gramene" id="Zm00001eb211260_T001">
    <property type="protein sequence ID" value="Zm00001eb211260_P001"/>
    <property type="gene ID" value="Zm00001eb211260"/>
</dbReference>
<dbReference type="eggNOG" id="ENOG502S7UD">
    <property type="taxonomic scope" value="Eukaryota"/>
</dbReference>
<dbReference type="InParanoid" id="D9HP26"/>
<dbReference type="OMA" id="LMICCCG"/>
<dbReference type="OrthoDB" id="1045822at2759"/>
<dbReference type="Proteomes" id="UP000007305">
    <property type="component" value="Chromosome 5"/>
</dbReference>
<dbReference type="ExpressionAtlas" id="D9HP26">
    <property type="expression patterns" value="baseline and differential"/>
</dbReference>
<dbReference type="GO" id="GO:0016020">
    <property type="term" value="C:membrane"/>
    <property type="evidence" value="ECO:0007669"/>
    <property type="project" value="UniProtKB-SubCell"/>
</dbReference>
<dbReference type="InterPro" id="IPR006461">
    <property type="entry name" value="PLAC_motif_containing"/>
</dbReference>
<dbReference type="NCBIfam" id="TIGR01571">
    <property type="entry name" value="A_thal_Cys_rich"/>
    <property type="match status" value="1"/>
</dbReference>
<dbReference type="PANTHER" id="PTHR15907">
    <property type="entry name" value="DUF614 FAMILY PROTEIN-RELATED"/>
    <property type="match status" value="1"/>
</dbReference>
<dbReference type="Pfam" id="PF04749">
    <property type="entry name" value="PLAC8"/>
    <property type="match status" value="1"/>
</dbReference>
<protein>
    <recommendedName>
        <fullName>Cell number regulator 10</fullName>
    </recommendedName>
    <alternativeName>
        <fullName>ZmCNR10</fullName>
    </alternativeName>
</protein>
<name>CNR10_MAIZE</name>
<organism>
    <name type="scientific">Zea mays</name>
    <name type="common">Maize</name>
    <dbReference type="NCBI Taxonomy" id="4577"/>
    <lineage>
        <taxon>Eukaryota</taxon>
        <taxon>Viridiplantae</taxon>
        <taxon>Streptophyta</taxon>
        <taxon>Embryophyta</taxon>
        <taxon>Tracheophyta</taxon>
        <taxon>Spermatophyta</taxon>
        <taxon>Magnoliopsida</taxon>
        <taxon>Liliopsida</taxon>
        <taxon>Poales</taxon>
        <taxon>Poaceae</taxon>
        <taxon>PACMAD clade</taxon>
        <taxon>Panicoideae</taxon>
        <taxon>Andropogonodae</taxon>
        <taxon>Andropogoneae</taxon>
        <taxon>Tripsacinae</taxon>
        <taxon>Zea</taxon>
    </lineage>
</organism>
<evidence type="ECO:0000255" key="1"/>
<evidence type="ECO:0000269" key="2">
    <source>
    </source>
</evidence>
<evidence type="ECO:0000305" key="3"/>
<proteinExistence type="evidence at transcript level"/>
<feature type="chain" id="PRO_0000407738" description="Cell number regulator 10">
    <location>
        <begin position="1"/>
        <end position="157"/>
    </location>
</feature>
<feature type="transmembrane region" description="Helical" evidence="1">
    <location>
        <begin position="41"/>
        <end position="57"/>
    </location>
</feature>
<feature type="transmembrane region" description="Helical" evidence="1">
    <location>
        <begin position="66"/>
        <end position="83"/>
    </location>
</feature>
<feature type="sequence conflict" description="In Ref. 2; ACG41719." evidence="3" ref="2">
    <location>
        <position position="8"/>
    </location>
</feature>
<feature type="sequence conflict" description="In Ref. 2; ACG41719." evidence="3" ref="2">
    <original>V</original>
    <variation>D</variation>
    <location>
        <position position="138"/>
    </location>
</feature>
<feature type="sequence conflict" description="In Ref. 2; ACG41719." evidence="3" ref="2">
    <original>D</original>
    <variation>E</variation>
    <location>
        <position position="142"/>
    </location>
</feature>
<feature type="sequence conflict" description="In Ref. 2; ACG41719." evidence="3" ref="2">
    <original>A</original>
    <variation>ATI</variation>
    <location>
        <position position="145"/>
    </location>
</feature>
<accession>D9HP26</accession>
<accession>B6TX86</accession>
<gene>
    <name type="primary">CNR10</name>
</gene>
<keyword id="KW-0472">Membrane</keyword>
<keyword id="KW-1185">Reference proteome</keyword>
<keyword id="KW-0812">Transmembrane</keyword>
<keyword id="KW-1133">Transmembrane helix</keyword>
<sequence length="157" mass="16660">MYPPKASGDPAAGAAPVTGFPVGGPAASSQWSSGLLDCFDDCGLCCLTCWCPCITFGRVAEIVDRGATSCGTAGALYAVLAYFTGCQWIYSCTYRAKMRAQLGLPETPCCDCLVHFCCEPCALCQQYKELKARGFDPVLGWDRNATMLPPSAQGMGR</sequence>
<comment type="subcellular location">
    <subcellularLocation>
        <location evidence="3">Membrane</location>
        <topology evidence="3">Multi-pass membrane protein</topology>
    </subcellularLocation>
</comment>
<comment type="tissue specificity">
    <text evidence="2">Expressed in roots, leaves, stalks, immature ears and silks.</text>
</comment>
<comment type="similarity">
    <text evidence="3">Belongs to the cornifelin family.</text>
</comment>
<reference key="1">
    <citation type="journal article" date="2010" name="Plant Cell">
        <title>Cell Number Regulator1 affects plant and organ size in maize: implications for crop yield enhancement and heterosis.</title>
        <authorList>
            <person name="Guo M."/>
            <person name="Rupe M.A."/>
            <person name="Dieter J.A."/>
            <person name="Zou J."/>
            <person name="Spielbauer D."/>
            <person name="Duncan K.E."/>
            <person name="Howard R.J."/>
            <person name="Hou Z."/>
            <person name="Simmons C.R."/>
        </authorList>
    </citation>
    <scope>NUCLEOTIDE SEQUENCE [MRNA]</scope>
    <scope>TISSUE SPECIFICITY</scope>
    <scope>GENE FAMILY</scope>
    <scope>NOMENCLATURE</scope>
    <source>
        <strain>cv. B73</strain>
    </source>
</reference>
<reference key="2">
    <citation type="journal article" date="2009" name="Plant Mol. Biol.">
        <title>Insights into corn genes derived from large-scale cDNA sequencing.</title>
        <authorList>
            <person name="Alexandrov N.N."/>
            <person name="Brover V.V."/>
            <person name="Freidin S."/>
            <person name="Troukhan M.E."/>
            <person name="Tatarinova T.V."/>
            <person name="Zhang H."/>
            <person name="Swaller T.J."/>
            <person name="Lu Y.-P."/>
            <person name="Bouck J."/>
            <person name="Flavell R.B."/>
            <person name="Feldmann K.A."/>
        </authorList>
    </citation>
    <scope>NUCLEOTIDE SEQUENCE [LARGE SCALE MRNA]</scope>
</reference>